<accession>Q9V1F3</accession>
<accession>G8ZGH8</accession>
<reference key="1">
    <citation type="journal article" date="2003" name="Mol. Microbiol.">
        <title>An integrated analysis of the genome of the hyperthermophilic archaeon Pyrococcus abyssi.</title>
        <authorList>
            <person name="Cohen G.N."/>
            <person name="Barbe V."/>
            <person name="Flament D."/>
            <person name="Galperin M."/>
            <person name="Heilig R."/>
            <person name="Lecompte O."/>
            <person name="Poch O."/>
            <person name="Prieur D."/>
            <person name="Querellou J."/>
            <person name="Ripp R."/>
            <person name="Thierry J.-C."/>
            <person name="Van der Oost J."/>
            <person name="Weissenbach J."/>
            <person name="Zivanovic Y."/>
            <person name="Forterre P."/>
        </authorList>
    </citation>
    <scope>NUCLEOTIDE SEQUENCE [LARGE SCALE GENOMIC DNA]</scope>
    <source>
        <strain>GE5 / Orsay</strain>
    </source>
</reference>
<reference key="2">
    <citation type="journal article" date="2012" name="Curr. Microbiol.">
        <title>Re-annotation of two hyperthermophilic archaea Pyrococcus abyssi GE5 and Pyrococcus furiosus DSM 3638.</title>
        <authorList>
            <person name="Gao J."/>
            <person name="Wang J."/>
        </authorList>
    </citation>
    <scope>GENOME REANNOTATION</scope>
    <source>
        <strain>GE5 / Orsay</strain>
    </source>
</reference>
<feature type="chain" id="PRO_0000143954" description="UPF0292 protein PYRAB04740">
    <location>
        <begin position="1"/>
        <end position="132"/>
    </location>
</feature>
<feature type="domain" description="Toprim" evidence="1">
    <location>
        <begin position="20"/>
        <end position="100"/>
    </location>
</feature>
<feature type="binding site" evidence="1">
    <location>
        <position position="26"/>
    </location>
    <ligand>
        <name>Mg(2+)</name>
        <dbReference type="ChEBI" id="CHEBI:18420"/>
        <label>1</label>
        <note>catalytic</note>
    </ligand>
</feature>
<feature type="binding site" evidence="1">
    <location>
        <position position="69"/>
    </location>
    <ligand>
        <name>Mg(2+)</name>
        <dbReference type="ChEBI" id="CHEBI:18420"/>
        <label>1</label>
        <note>catalytic</note>
    </ligand>
</feature>
<feature type="binding site" evidence="1">
    <location>
        <position position="69"/>
    </location>
    <ligand>
        <name>Mg(2+)</name>
        <dbReference type="ChEBI" id="CHEBI:18420"/>
        <label>2</label>
    </ligand>
</feature>
<feature type="binding site" evidence="1">
    <location>
        <position position="71"/>
    </location>
    <ligand>
        <name>Mg(2+)</name>
        <dbReference type="ChEBI" id="CHEBI:18420"/>
        <label>2</label>
    </ligand>
</feature>
<organism>
    <name type="scientific">Pyrococcus abyssi (strain GE5 / Orsay)</name>
    <dbReference type="NCBI Taxonomy" id="272844"/>
    <lineage>
        <taxon>Archaea</taxon>
        <taxon>Methanobacteriati</taxon>
        <taxon>Methanobacteriota</taxon>
        <taxon>Thermococci</taxon>
        <taxon>Thermococcales</taxon>
        <taxon>Thermococcaceae</taxon>
        <taxon>Pyrococcus</taxon>
    </lineage>
</organism>
<gene>
    <name type="ordered locus">PYRAB04740</name>
    <name type="ORF">PAB0315</name>
</gene>
<comment type="cofactor">
    <cofactor evidence="1">
        <name>Mg(2+)</name>
        <dbReference type="ChEBI" id="CHEBI:18420"/>
    </cofactor>
    <text evidence="1">Binds two Mg(2+) per subunit.</text>
</comment>
<comment type="similarity">
    <text evidence="1">Belongs to the UPF0292 family.</text>
</comment>
<protein>
    <recommendedName>
        <fullName evidence="1">UPF0292 protein PYRAB04740</fullName>
    </recommendedName>
</protein>
<proteinExistence type="inferred from homology"/>
<evidence type="ECO:0000255" key="1">
    <source>
        <dbReference type="HAMAP-Rule" id="MF_01095"/>
    </source>
</evidence>
<dbReference type="EMBL" id="AJ248284">
    <property type="protein sequence ID" value="CAB49396.1"/>
    <property type="molecule type" value="Genomic_DNA"/>
</dbReference>
<dbReference type="EMBL" id="HE613800">
    <property type="protein sequence ID" value="CCE69857.1"/>
    <property type="molecule type" value="Genomic_DNA"/>
</dbReference>
<dbReference type="PIR" id="E75164">
    <property type="entry name" value="E75164"/>
</dbReference>
<dbReference type="RefSeq" id="WP_010867598.1">
    <property type="nucleotide sequence ID" value="NC_000868.1"/>
</dbReference>
<dbReference type="SMR" id="Q9V1F3"/>
<dbReference type="STRING" id="272844.PAB0315"/>
<dbReference type="KEGG" id="pab:PAB0315"/>
<dbReference type="PATRIC" id="fig|272844.11.peg.501"/>
<dbReference type="eggNOG" id="arCOG01486">
    <property type="taxonomic scope" value="Archaea"/>
</dbReference>
<dbReference type="HOGENOM" id="CLU_140789_3_0_2"/>
<dbReference type="OrthoDB" id="56459at2157"/>
<dbReference type="PhylomeDB" id="Q9V1F3"/>
<dbReference type="Proteomes" id="UP000000810">
    <property type="component" value="Chromosome"/>
</dbReference>
<dbReference type="Proteomes" id="UP000009139">
    <property type="component" value="Chromosome"/>
</dbReference>
<dbReference type="GO" id="GO:0046872">
    <property type="term" value="F:metal ion binding"/>
    <property type="evidence" value="ECO:0007669"/>
    <property type="project" value="UniProtKB-KW"/>
</dbReference>
<dbReference type="CDD" id="cd01027">
    <property type="entry name" value="TOPRIM_RNase_M5_like"/>
    <property type="match status" value="1"/>
</dbReference>
<dbReference type="Gene3D" id="3.40.1360.10">
    <property type="match status" value="1"/>
</dbReference>
<dbReference type="HAMAP" id="MF_01095">
    <property type="entry name" value="UPF0292"/>
    <property type="match status" value="1"/>
</dbReference>
<dbReference type="InterPro" id="IPR006171">
    <property type="entry name" value="TOPRIM_dom"/>
</dbReference>
<dbReference type="InterPro" id="IPR034141">
    <property type="entry name" value="TOPRIM_RNase_M5-like"/>
</dbReference>
<dbReference type="InterPro" id="IPR022972">
    <property type="entry name" value="UPF0292"/>
</dbReference>
<dbReference type="NCBIfam" id="NF003090">
    <property type="entry name" value="PRK04017.1-1"/>
    <property type="match status" value="1"/>
</dbReference>
<dbReference type="PANTHER" id="PTHR39964:SF2">
    <property type="entry name" value="UPF0292 PROTEIN MJ1624"/>
    <property type="match status" value="1"/>
</dbReference>
<dbReference type="PANTHER" id="PTHR39964">
    <property type="entry name" value="UPF0292 PROTEIN TK1411"/>
    <property type="match status" value="1"/>
</dbReference>
<dbReference type="Pfam" id="PF01751">
    <property type="entry name" value="Toprim"/>
    <property type="match status" value="1"/>
</dbReference>
<dbReference type="SMART" id="SM00493">
    <property type="entry name" value="TOPRIM"/>
    <property type="match status" value="1"/>
</dbReference>
<dbReference type="SUPFAM" id="SSF110455">
    <property type="entry name" value="Toprim domain"/>
    <property type="match status" value="1"/>
</dbReference>
<dbReference type="PROSITE" id="PS50880">
    <property type="entry name" value="TOPRIM"/>
    <property type="match status" value="1"/>
</dbReference>
<sequence length="132" mass="15255">MYAENYKIFEAIIDKLREFDGAIIVEGPRDEISLRKLGVRAEIIKLSRLPLAEVALIASQYKEVMILTDLDRKGEELAKKLAMYLEGYGCKVDTETRRSLKMIAKKDIKGIEDLYNLYLRVSLRFWPPEEGI</sequence>
<keyword id="KW-0460">Magnesium</keyword>
<keyword id="KW-0479">Metal-binding</keyword>
<name>Y474_PYRAB</name>